<accession>Q28983</accession>
<gene>
    <name type="primary">ZAN</name>
</gene>
<evidence type="ECO:0000250" key="1"/>
<evidence type="ECO:0000255" key="2"/>
<evidence type="ECO:0000255" key="3">
    <source>
        <dbReference type="PROSITE-ProRule" id="PRU00076"/>
    </source>
</evidence>
<evidence type="ECO:0000255" key="4">
    <source>
        <dbReference type="PROSITE-ProRule" id="PRU00128"/>
    </source>
</evidence>
<evidence type="ECO:0000255" key="5">
    <source>
        <dbReference type="PROSITE-ProRule" id="PRU00580"/>
    </source>
</evidence>
<evidence type="ECO:0000256" key="6">
    <source>
        <dbReference type="SAM" id="MobiDB-lite"/>
    </source>
</evidence>
<evidence type="ECO:0000305" key="7"/>
<dbReference type="EMBL" id="U40024">
    <property type="protein sequence ID" value="AAC48486.1"/>
    <property type="molecule type" value="mRNA"/>
</dbReference>
<dbReference type="PIR" id="T34022">
    <property type="entry name" value="T34022"/>
</dbReference>
<dbReference type="RefSeq" id="NP_999548.1">
    <property type="nucleotide sequence ID" value="NM_214383.1"/>
</dbReference>
<dbReference type="SMR" id="Q28983"/>
<dbReference type="FunCoup" id="Q28983">
    <property type="interactions" value="218"/>
</dbReference>
<dbReference type="STRING" id="9823.ENSSSCP00000067423"/>
<dbReference type="GlyCosmos" id="Q28983">
    <property type="glycosylation" value="18 sites, No reported glycans"/>
</dbReference>
<dbReference type="GlyGen" id="Q28983">
    <property type="glycosylation" value="21 sites"/>
</dbReference>
<dbReference type="PaxDb" id="9823-ENSSSCP00000008195"/>
<dbReference type="PeptideAtlas" id="Q28983"/>
<dbReference type="GeneID" id="397676"/>
<dbReference type="KEGG" id="ssc:397676"/>
<dbReference type="CTD" id="7455"/>
<dbReference type="eggNOG" id="KOG1216">
    <property type="taxonomic scope" value="Eukaryota"/>
</dbReference>
<dbReference type="InParanoid" id="Q28983"/>
<dbReference type="OrthoDB" id="5945029at2759"/>
<dbReference type="Proteomes" id="UP000008227">
    <property type="component" value="Unplaced"/>
</dbReference>
<dbReference type="Proteomes" id="UP000314985">
    <property type="component" value="Unplaced"/>
</dbReference>
<dbReference type="Proteomes" id="UP000694570">
    <property type="component" value="Unplaced"/>
</dbReference>
<dbReference type="Proteomes" id="UP000694571">
    <property type="component" value="Unplaced"/>
</dbReference>
<dbReference type="Proteomes" id="UP000694720">
    <property type="component" value="Unplaced"/>
</dbReference>
<dbReference type="Proteomes" id="UP000694722">
    <property type="component" value="Unplaced"/>
</dbReference>
<dbReference type="Proteomes" id="UP000694723">
    <property type="component" value="Unplaced"/>
</dbReference>
<dbReference type="Proteomes" id="UP000694724">
    <property type="component" value="Unplaced"/>
</dbReference>
<dbReference type="Proteomes" id="UP000694725">
    <property type="component" value="Unplaced"/>
</dbReference>
<dbReference type="Proteomes" id="UP000694726">
    <property type="component" value="Unplaced"/>
</dbReference>
<dbReference type="Proteomes" id="UP000694727">
    <property type="component" value="Unplaced"/>
</dbReference>
<dbReference type="Proteomes" id="UP000694728">
    <property type="component" value="Unplaced"/>
</dbReference>
<dbReference type="GO" id="GO:0031012">
    <property type="term" value="C:extracellular matrix"/>
    <property type="evidence" value="ECO:0000318"/>
    <property type="project" value="GO_Central"/>
</dbReference>
<dbReference type="GO" id="GO:0005615">
    <property type="term" value="C:extracellular space"/>
    <property type="evidence" value="ECO:0000318"/>
    <property type="project" value="GO_Central"/>
</dbReference>
<dbReference type="GO" id="GO:0005886">
    <property type="term" value="C:plasma membrane"/>
    <property type="evidence" value="ECO:0000314"/>
    <property type="project" value="MGI"/>
</dbReference>
<dbReference type="GO" id="GO:0050840">
    <property type="term" value="F:extracellular matrix binding"/>
    <property type="evidence" value="ECO:0000314"/>
    <property type="project" value="MGI"/>
</dbReference>
<dbReference type="GO" id="GO:0007339">
    <property type="term" value="P:binding of sperm to zona pellucida"/>
    <property type="evidence" value="ECO:0000314"/>
    <property type="project" value="MGI"/>
</dbReference>
<dbReference type="GO" id="GO:0007155">
    <property type="term" value="P:cell adhesion"/>
    <property type="evidence" value="ECO:0007669"/>
    <property type="project" value="UniProtKB-KW"/>
</dbReference>
<dbReference type="CDD" id="cd00054">
    <property type="entry name" value="EGF_CA"/>
    <property type="match status" value="1"/>
</dbReference>
<dbReference type="CDD" id="cd06263">
    <property type="entry name" value="MAM"/>
    <property type="match status" value="2"/>
</dbReference>
<dbReference type="CDD" id="cd19941">
    <property type="entry name" value="TIL"/>
    <property type="match status" value="5"/>
</dbReference>
<dbReference type="FunFam" id="2.10.25.10:FF:000055">
    <property type="entry name" value="alpha-tectorin isoform X1"/>
    <property type="match status" value="4"/>
</dbReference>
<dbReference type="FunFam" id="2.60.120.200:FF:000128">
    <property type="entry name" value="enteropeptidase isoform X2"/>
    <property type="match status" value="1"/>
</dbReference>
<dbReference type="FunFam" id="2.10.25.10:FF:000936">
    <property type="entry name" value="Zonadhesin"/>
    <property type="match status" value="1"/>
</dbReference>
<dbReference type="Gene3D" id="2.60.120.200">
    <property type="match status" value="2"/>
</dbReference>
<dbReference type="Gene3D" id="2.10.25.10">
    <property type="entry name" value="Laminin"/>
    <property type="match status" value="6"/>
</dbReference>
<dbReference type="InterPro" id="IPR052749">
    <property type="entry name" value="Alpha-tectorin"/>
</dbReference>
<dbReference type="InterPro" id="IPR013320">
    <property type="entry name" value="ConA-like_dom_sf"/>
</dbReference>
<dbReference type="InterPro" id="IPR000742">
    <property type="entry name" value="EGF-like_dom"/>
</dbReference>
<dbReference type="InterPro" id="IPR000998">
    <property type="entry name" value="MAM_dom"/>
</dbReference>
<dbReference type="InterPro" id="IPR036084">
    <property type="entry name" value="Ser_inhib-like_sf"/>
</dbReference>
<dbReference type="InterPro" id="IPR002919">
    <property type="entry name" value="TIL_dom"/>
</dbReference>
<dbReference type="InterPro" id="IPR025615">
    <property type="entry name" value="TILa_dom"/>
</dbReference>
<dbReference type="InterPro" id="IPR014853">
    <property type="entry name" value="VWF/SSPO/ZAN-like_Cys-rich_dom"/>
</dbReference>
<dbReference type="InterPro" id="IPR001007">
    <property type="entry name" value="VWF_dom"/>
</dbReference>
<dbReference type="InterPro" id="IPR001846">
    <property type="entry name" value="VWF_type-D"/>
</dbReference>
<dbReference type="PANTHER" id="PTHR46160">
    <property type="entry name" value="ALPHA-TECTORIN-RELATED"/>
    <property type="match status" value="1"/>
</dbReference>
<dbReference type="PANTHER" id="PTHR46160:SF9">
    <property type="entry name" value="PROTEIN PRY2-RELATED"/>
    <property type="match status" value="1"/>
</dbReference>
<dbReference type="Pfam" id="PF08742">
    <property type="entry name" value="C8"/>
    <property type="match status" value="4"/>
</dbReference>
<dbReference type="Pfam" id="PF00629">
    <property type="entry name" value="MAM"/>
    <property type="match status" value="2"/>
</dbReference>
<dbReference type="Pfam" id="PF01826">
    <property type="entry name" value="TIL"/>
    <property type="match status" value="5"/>
</dbReference>
<dbReference type="Pfam" id="PF12714">
    <property type="entry name" value="TILa"/>
    <property type="match status" value="5"/>
</dbReference>
<dbReference type="Pfam" id="PF00094">
    <property type="entry name" value="VWD"/>
    <property type="match status" value="4"/>
</dbReference>
<dbReference type="SMART" id="SM00832">
    <property type="entry name" value="C8"/>
    <property type="match status" value="4"/>
</dbReference>
<dbReference type="SMART" id="SM00181">
    <property type="entry name" value="EGF"/>
    <property type="match status" value="4"/>
</dbReference>
<dbReference type="SMART" id="SM00137">
    <property type="entry name" value="MAM"/>
    <property type="match status" value="1"/>
</dbReference>
<dbReference type="SMART" id="SM00214">
    <property type="entry name" value="VWC"/>
    <property type="match status" value="2"/>
</dbReference>
<dbReference type="SMART" id="SM00215">
    <property type="entry name" value="VWC_out"/>
    <property type="match status" value="3"/>
</dbReference>
<dbReference type="SMART" id="SM00216">
    <property type="entry name" value="VWD"/>
    <property type="match status" value="4"/>
</dbReference>
<dbReference type="SUPFAM" id="SSF49899">
    <property type="entry name" value="Concanavalin A-like lectins/glucanases"/>
    <property type="match status" value="2"/>
</dbReference>
<dbReference type="SUPFAM" id="SSF57196">
    <property type="entry name" value="EGF/Laminin"/>
    <property type="match status" value="1"/>
</dbReference>
<dbReference type="SUPFAM" id="SSF57567">
    <property type="entry name" value="Serine protease inhibitors"/>
    <property type="match status" value="5"/>
</dbReference>
<dbReference type="PROSITE" id="PS00022">
    <property type="entry name" value="EGF_1"/>
    <property type="match status" value="1"/>
</dbReference>
<dbReference type="PROSITE" id="PS01186">
    <property type="entry name" value="EGF_2"/>
    <property type="match status" value="4"/>
</dbReference>
<dbReference type="PROSITE" id="PS50026">
    <property type="entry name" value="EGF_3"/>
    <property type="match status" value="1"/>
</dbReference>
<dbReference type="PROSITE" id="PS00740">
    <property type="entry name" value="MAM_1"/>
    <property type="match status" value="1"/>
</dbReference>
<dbReference type="PROSITE" id="PS50060">
    <property type="entry name" value="MAM_2"/>
    <property type="match status" value="2"/>
</dbReference>
<dbReference type="PROSITE" id="PS51233">
    <property type="entry name" value="VWFD"/>
    <property type="match status" value="4"/>
</dbReference>
<comment type="function">
    <text>Binds in a species-specific manner to the zona pellucida of the egg. May be involved in gamete recognition and/or signaling.</text>
</comment>
<comment type="subunit">
    <text>Probably forms covalent oligomers.</text>
</comment>
<comment type="subcellular location">
    <subcellularLocation>
        <location>Cell membrane</location>
        <topology>Single-pass type I membrane protein</topology>
    </subcellularLocation>
    <text evidence="1">Exclusively on the apical region of the sperm head.</text>
</comment>
<comment type="tissue specificity">
    <text>In testis, primarily in haploid spermatids. Not in lung, liver, heart, spleen, brain, kidney, epididymis.</text>
</comment>
<comment type="domain">
    <text>The MAM domains probably mediate sperm adhesion to the zona pellucida.</text>
</comment>
<comment type="domain">
    <text>During sperm migration through the reproductive tracts, the mucin-like domain might inhibit inappropriate trapping of spermatozoa or promoting adhesion to the oviductal isthmus.</text>
</comment>
<comment type="domain">
    <text>The VWFD domains 2 and 3 may mediate covalent oligomerization (By similarity to human intestinal mucin MUC2).</text>
</comment>
<comment type="PTM">
    <text>The MAM domains and the mucin-like domains are missing from the zonadhesin that binds to the egg extracellular matrix. Processing might occur during sperm maturation and/or capacitation.</text>
</comment>
<protein>
    <recommendedName>
        <fullName>Zonadhesin</fullName>
    </recommendedName>
</protein>
<sequence length="2476" mass="270365">MLGLPALAGPMAMPHPPLIPSTPTLLAFSFPGGFYMLLDPKNAKPRQRSALLSPLIQSSGCLSLSFQYTQRGQASGATLMVYASVLGSIRKHTLFSGQPGPSWQPVSVNYTSQGQIQFTLVGVFGKIPEPAVAVDAISIAPCEESFPQCDFEDNAHPFCDWVQASQDGGYWRQGNKNTFIQPAGPFGISLNGEGHYIFLETDKFSQAGQSFRLVSRPFCAPAVICVTFTYHMYGLGQGTKLRLLLGSPAGSPPSSLWERVGPQSPEWLNTSVTIPSGHQQPMQLIFEAVRGTNTAFVVALGFVLINHGTCRGPSETSVSTEKPVAPTEKPTVPSEIYTIPTEKPMVHMEKPIVHTEKPTVPTEKPTIPTEKSTVPTKKPTVFKEPTLPPEGPTVPAERPTTPPEGPAVPPKGPTVLTEWPTSHTEKSTVHTEKPILPTGKSTIPTEKPMVPTKRTTTPTERTTIPAEKPTVPIEKPMVPTERTTIPTERTTIPTEKPTVPTEKLTVPTEKPIVPTEKPIVPTEKHTIPTEKLTVLTERTTTPTERTTIPTEKPTVPTEKPSVPTEKPTVPTEEPTIPTEKLTVPTERTTTPTKRTTTPTIRTTTPTIRTTTPTERTTTPTIRTTTPTERTTIPTKKTTVPTEKTIIPTERTIAPTTPQPSPTLVPTQPAAVVMPSTSATTVTPRTTIASCPPNAHFERCACPVSCQSPTPNCELFCKPGCVCDPGFLFSGSHCVNASSCDCFYNDNYYKLGTDWFSPNCTEHCHCRPSSRMECQTFKCGTHTVCQLKNGQYGCHPYGSATCSVYGDPHYLTFDGRRFNFMGKCTYILAQPCGNLTEHFFRVLVKKEERGQEGVSCLSKVYVTLPESTVTLLKGRHTLVGGQRVTLPAIPSRGVFLAPSGRFVELQTAFGLRVRWDGDQQLFVSVPSTFSGKLCGLCGDYDGDSSNDNQKPDGSPAKDEKELGSSWQTSEDADQQCEENQVSPPSCNTALQNTMSGPEFCGQLVAPHGVFEACLPHLRASSFFKSCTFDMCNFQGLQHMLCAHMSALTENCQDAGYTVKPWRGPQFCPLACPRNSRYTLCARLCPDTCHSEFSGRACKDRCVEGCECDPGFVLSGLQCVSRSECGCLDSTAGYVKVGERWFKPGCRQLCICEGNNRTRCVLWRCQAQEFCGQQDGIYGCHAQGSATCTVSGDPHYLTFDGALHHFTGTCTYTLTKPCWLRSLENSFLVSATNEFRGGNLEASYVRAVQVQVFNLRISLIKGRKVTLDGRRVALPLWPAQGRVSITSSGSFILLYTDFGLQVRYDGDHLVEVTVPSSYAGRLCGLCGNYNNNSLDDILQPDKRPASSSVRLGASWKINELSEPGCFAEGGKPPRCLGKEVADAWRKNCDVLMNPQGPFSQCHRVVAPQSSFSSCLYGQCATKGDTLTLCRSLQAYASLCARAGQALTWRNGTFCPLKCPSGSSYSTCANPCPATCLSLNNPSYCPSTLPCAEGCECQKGHILSGTSCVPLSQCGCTTQRGSYHPVGESWYTDNSCSRLCTCSAHNNISCRQASCKPSQMCWPQDGLIRCRVAGMGVCRIPDTSHYVSFDGSYHAVRGNCTYVLVKICHSTMDLPFFKISGENGKREGQPPAFYLRQVYVDIFNTLVTLKQDQVLINGTRVSLPATTQIRGVRVISRDGYTVLTINIGVQVKFDGRGFLEVEIPKAYYGRTCGVCGNFNDEEEDELMMPSDALALDDVMYVDSWRDKEIDPNCQEDDRKTEAESQEQPSANCRPADLERAQEQCQAAFQAPAWANCATRVVLSPYVRSCTHKLCEFGGLNRAFCESLQAFGAACQAQGIKPPVWRNSSFCPLDCSAHSVYTSCVPSCLPSCQDPEGQCTGAGAPSTCEEGCICEPGYVLSEQQCVARSQCGCRDARGTFLPVGRFRLSSGCSQMCVCTAGAIECRPFTCPSGSQCEPNEDGKDFCQPNSSNLCSVFGDPHYRTFDGLSYRFQGRMTYTLVKTLDVLPDGVEPLVVEGRNKVYPSLTPVFLQEIIVMVYGYTVQLQAELELVVNGQKVSIPYKPNEYLQVTLRGRRLYLVTDFELVVSFNGRNNAVIAMPSTYLGLVRGLCGNYDKNKRNDFMLPNGSFTQNLLVFGNSWEVKAKEGHPRFSRAIREEEEKNEESGFQNVSECSPEQLELVNHTQACGVLVDPQGPFAACHQIVAPGPFQEHCVFDLCAAPGPKEQEELRCQVLSGYAIICQESGPTLAGWRDHTHCALPCPANTVYQSCMTPCPASCATLAVPRACDGPCVEGCASLPGYIYSGAQSLPMAHCGCTNNGVYYQQGDSFVTENCSQRCTCASSGVLLCEPLSCRPGEICTLGNLTRGCFRDSPCLQNPCQNDGRCREQGTHFTCECELGYGGDLCTEPRGVPSPKKPEASNRVAILLGMLMPTVLLVPAVTRVSRKRRRRRRPSRERTQSQNRGKRAGTDCAPEQAYKVA</sequence>
<keyword id="KW-0130">Cell adhesion</keyword>
<keyword id="KW-1003">Cell membrane</keyword>
<keyword id="KW-0903">Direct protein sequencing</keyword>
<keyword id="KW-1015">Disulfide bond</keyword>
<keyword id="KW-0245">EGF-like domain</keyword>
<keyword id="KW-0325">Glycoprotein</keyword>
<keyword id="KW-0472">Membrane</keyword>
<keyword id="KW-1185">Reference proteome</keyword>
<keyword id="KW-0677">Repeat</keyword>
<keyword id="KW-0732">Signal</keyword>
<keyword id="KW-0812">Transmembrane</keyword>
<keyword id="KW-1133">Transmembrane helix</keyword>
<proteinExistence type="evidence at protein level"/>
<reference key="1">
    <citation type="journal article" date="1995" name="J. Biol. Chem.">
        <title>A sperm membrane protein that binds in a species-specific manner to the egg extracellular matrix is homologous to von Willebrand factor.</title>
        <authorList>
            <person name="Hardy D.M."/>
            <person name="Garbers D.L."/>
        </authorList>
    </citation>
    <scope>NUCLEOTIDE SEQUENCE [MRNA]</scope>
    <scope>PROTEIN SEQUENCE OF 823-830; 859-872; 883-890; 920-925; 960-967; 1235-1244; 1349-1354; 1518-1532; 1624-1656; 1658-1667; 1777-1795 AND 1914-1921</scope>
    <source>
        <strain>Meishan</strain>
        <tissue>Testis</tissue>
    </source>
</reference>
<organism>
    <name type="scientific">Sus scrofa</name>
    <name type="common">Pig</name>
    <dbReference type="NCBI Taxonomy" id="9823"/>
    <lineage>
        <taxon>Eukaryota</taxon>
        <taxon>Metazoa</taxon>
        <taxon>Chordata</taxon>
        <taxon>Craniata</taxon>
        <taxon>Vertebrata</taxon>
        <taxon>Euteleostomi</taxon>
        <taxon>Mammalia</taxon>
        <taxon>Eutheria</taxon>
        <taxon>Laurasiatheria</taxon>
        <taxon>Artiodactyla</taxon>
        <taxon>Suina</taxon>
        <taxon>Suidae</taxon>
        <taxon>Sus</taxon>
    </lineage>
</organism>
<name>ZAN_PIG</name>
<feature type="signal peptide" evidence="2">
    <location>
        <begin position="1"/>
        <end position="29"/>
    </location>
</feature>
<feature type="chain" id="PRO_0000007785" description="Zonadhesin">
    <location>
        <begin position="30"/>
        <end position="2476"/>
    </location>
</feature>
<feature type="topological domain" description="Extracellular" evidence="2">
    <location>
        <begin position="30"/>
        <end position="2418"/>
    </location>
</feature>
<feature type="transmembrane region" description="Helical" evidence="2">
    <location>
        <begin position="2419"/>
        <end position="2439"/>
    </location>
</feature>
<feature type="topological domain" description="Cytoplasmic" evidence="2">
    <location>
        <begin position="2440"/>
        <end position="2476"/>
    </location>
</feature>
<feature type="domain" description="MAM 1" evidence="4">
    <location>
        <begin position="31"/>
        <end position="144"/>
    </location>
</feature>
<feature type="domain" description="MAM 2" evidence="4">
    <location>
        <begin position="147"/>
        <end position="312"/>
    </location>
</feature>
<feature type="domain" description="TIL 1">
    <location>
        <begin position="690"/>
        <end position="739"/>
    </location>
</feature>
<feature type="domain" description="VWFC 1">
    <location>
        <begin position="740"/>
        <end position="794"/>
    </location>
</feature>
<feature type="domain" description="VWFD 1" evidence="5">
    <location>
        <begin position="799"/>
        <end position="976"/>
    </location>
</feature>
<feature type="domain" description="TIL 2">
    <location>
        <begin position="1070"/>
        <end position="1123"/>
    </location>
</feature>
<feature type="domain" description="VWFC 2">
    <location>
        <begin position="1124"/>
        <end position="1180"/>
    </location>
</feature>
<feature type="domain" description="VWFD 2" evidence="5">
    <location>
        <begin position="1184"/>
        <end position="1364"/>
    </location>
</feature>
<feature type="domain" description="TIL 3">
    <location>
        <begin position="1456"/>
        <end position="1511"/>
    </location>
</feature>
<feature type="domain" description="VWFC 3">
    <location>
        <begin position="1512"/>
        <end position="1568"/>
    </location>
</feature>
<feature type="domain" description="VWFD 3" evidence="5">
    <location>
        <begin position="1573"/>
        <end position="1751"/>
    </location>
</feature>
<feature type="domain" description="TIL 4">
    <location>
        <begin position="1851"/>
        <end position="1907"/>
    </location>
</feature>
<feature type="domain" description="VWFC 4">
    <location>
        <begin position="1908"/>
        <end position="1963"/>
    </location>
</feature>
<feature type="domain" description="VWFD 4" evidence="5">
    <location>
        <begin position="1968"/>
        <end position="2145"/>
    </location>
</feature>
<feature type="domain" description="TIL 5">
    <location>
        <begin position="2257"/>
        <end position="2310"/>
    </location>
</feature>
<feature type="domain" description="VWFC 5">
    <location>
        <begin position="2311"/>
        <end position="2365"/>
    </location>
</feature>
<feature type="domain" description="EGF-like" evidence="3">
    <location>
        <begin position="2366"/>
        <end position="2402"/>
    </location>
</feature>
<feature type="region of interest" description="Disordered" evidence="6">
    <location>
        <begin position="313"/>
        <end position="332"/>
    </location>
</feature>
<feature type="region of interest" description="53 X approximate heptapeptide repeats (mucin-like domain)">
    <location>
        <begin position="319"/>
        <end position="687"/>
    </location>
</feature>
<feature type="region of interest" description="Disordered" evidence="6">
    <location>
        <begin position="358"/>
        <end position="462"/>
    </location>
</feature>
<feature type="region of interest" description="Disordered" evidence="6">
    <location>
        <begin position="537"/>
        <end position="632"/>
    </location>
</feature>
<feature type="region of interest" description="Disordered" evidence="6">
    <location>
        <begin position="943"/>
        <end position="983"/>
    </location>
</feature>
<feature type="region of interest" description="Disordered" evidence="6">
    <location>
        <begin position="1747"/>
        <end position="1768"/>
    </location>
</feature>
<feature type="region of interest" description="Disordered" evidence="6">
    <location>
        <begin position="2438"/>
        <end position="2476"/>
    </location>
</feature>
<feature type="compositionally biased region" description="Low complexity" evidence="6">
    <location>
        <begin position="358"/>
        <end position="373"/>
    </location>
</feature>
<feature type="compositionally biased region" description="Pro residues" evidence="6">
    <location>
        <begin position="400"/>
        <end position="412"/>
    </location>
</feature>
<feature type="compositionally biased region" description="Basic and acidic residues" evidence="6">
    <location>
        <begin position="423"/>
        <end position="433"/>
    </location>
</feature>
<feature type="compositionally biased region" description="Low complexity" evidence="6">
    <location>
        <begin position="451"/>
        <end position="462"/>
    </location>
</feature>
<feature type="compositionally biased region" description="Basic and acidic residues" evidence="6">
    <location>
        <begin position="1747"/>
        <end position="1759"/>
    </location>
</feature>
<feature type="compositionally biased region" description="Basic residues" evidence="6">
    <location>
        <begin position="2439"/>
        <end position="2450"/>
    </location>
</feature>
<feature type="glycosylation site" description="N-linked (GlcNAc...) asparagine" evidence="2">
    <location>
        <position position="109"/>
    </location>
</feature>
<feature type="glycosylation site" description="N-linked (GlcNAc...) asparagine" evidence="2">
    <location>
        <position position="269"/>
    </location>
</feature>
<feature type="glycosylation site" description="N-linked (GlcNAc...) asparagine" evidence="2">
    <location>
        <position position="735"/>
    </location>
</feature>
<feature type="glycosylation site" description="N-linked (GlcNAc...) asparagine" evidence="2">
    <location>
        <position position="758"/>
    </location>
</feature>
<feature type="glycosylation site" description="N-linked (GlcNAc...) asparagine" evidence="2">
    <location>
        <position position="833"/>
    </location>
</feature>
<feature type="glycosylation site" description="N-linked (GlcNAc...) asparagine" evidence="2">
    <location>
        <position position="1154"/>
    </location>
</feature>
<feature type="glycosylation site" description="N-linked (GlcNAc...) asparagine" evidence="2">
    <location>
        <position position="1329"/>
    </location>
</feature>
<feature type="glycosylation site" description="N-linked (GlcNAc...) asparagine" evidence="2">
    <location>
        <position position="1448"/>
    </location>
</feature>
<feature type="glycosylation site" description="N-linked (GlcNAc...) asparagine" evidence="2">
    <location>
        <position position="1544"/>
    </location>
</feature>
<feature type="glycosylation site" description="N-linked (GlcNAc...) asparagine" evidence="2">
    <location>
        <position position="1596"/>
    </location>
</feature>
<feature type="glycosylation site" description="N-linked (GlcNAc...) asparagine" evidence="2">
    <location>
        <position position="1654"/>
    </location>
</feature>
<feature type="glycosylation site" description="N-linked (GlcNAc...) asparagine" evidence="2">
    <location>
        <position position="1843"/>
    </location>
</feature>
<feature type="glycosylation site" description="N-linked (GlcNAc...) asparagine" evidence="2">
    <location>
        <position position="1965"/>
    </location>
</feature>
<feature type="glycosylation site" description="N-linked (GlcNAc...) asparagine" evidence="2">
    <location>
        <position position="2122"/>
    </location>
</feature>
<feature type="glycosylation site" description="N-linked (GlcNAc...) asparagine" evidence="2">
    <location>
        <position position="2165"/>
    </location>
</feature>
<feature type="glycosylation site" description="N-linked (GlcNAc...) asparagine" evidence="2">
    <location>
        <position position="2178"/>
    </location>
</feature>
<feature type="glycosylation site" description="N-linked (GlcNAc...) asparagine" evidence="2">
    <location>
        <position position="2329"/>
    </location>
</feature>
<feature type="glycosylation site" description="N-linked (GlcNAc...) asparagine" evidence="2">
    <location>
        <position position="2359"/>
    </location>
</feature>
<feature type="disulfide bond" evidence="5">
    <location>
        <begin position="801"/>
        <end position="936"/>
    </location>
</feature>
<feature type="disulfide bond" evidence="5">
    <location>
        <begin position="823"/>
        <end position="975"/>
    </location>
</feature>
<feature type="disulfide bond" evidence="5">
    <location>
        <begin position="1186"/>
        <end position="1324"/>
    </location>
</feature>
<feature type="disulfide bond" evidence="5">
    <location>
        <begin position="1208"/>
        <end position="1363"/>
    </location>
</feature>
<feature type="disulfide bond" evidence="5">
    <location>
        <begin position="1575"/>
        <end position="1712"/>
    </location>
</feature>
<feature type="disulfide bond" evidence="5">
    <location>
        <begin position="1597"/>
        <end position="1750"/>
    </location>
</feature>
<feature type="disulfide bond" evidence="5">
    <location>
        <begin position="1970"/>
        <end position="2107"/>
    </location>
</feature>
<feature type="disulfide bond" evidence="1">
    <location>
        <begin position="2370"/>
        <end position="2381"/>
    </location>
</feature>
<feature type="disulfide bond" evidence="1">
    <location>
        <begin position="2375"/>
        <end position="2390"/>
    </location>
</feature>
<feature type="disulfide bond" evidence="1">
    <location>
        <begin position="2392"/>
        <end position="2401"/>
    </location>
</feature>
<feature type="sequence conflict" description="In Ref. 1; AA sequence." evidence="7" ref="1">
    <original>C</original>
    <variation>V</variation>
    <location>
        <position position="823"/>
    </location>
</feature>
<feature type="sequence conflict" description="In Ref. 1; AA sequence." evidence="7" ref="1">
    <original>S</original>
    <variation>Y</variation>
    <location>
        <position position="923"/>
    </location>
</feature>
<feature type="sequence conflict" description="In Ref. 1; AA sequence." evidence="7" ref="1">
    <original>W</original>
    <variation>Y</variation>
    <location>
        <position position="965"/>
    </location>
</feature>
<feature type="sequence conflict" description="In Ref. 1; AA sequence." evidence="7" ref="1">
    <original>S</original>
    <variation>K</variation>
    <location>
        <position position="1241"/>
    </location>
</feature>